<name>IDI1_PHARH</name>
<organism>
    <name type="scientific">Phaffia rhodozyma</name>
    <name type="common">Yeast</name>
    <name type="synonym">Xanthophyllomyces dendrorhous</name>
    <dbReference type="NCBI Taxonomy" id="264483"/>
    <lineage>
        <taxon>Eukaryota</taxon>
        <taxon>Fungi</taxon>
        <taxon>Dikarya</taxon>
        <taxon>Basidiomycota</taxon>
        <taxon>Agaricomycotina</taxon>
        <taxon>Tremellomycetes</taxon>
        <taxon>Cystofilobasidiales</taxon>
        <taxon>Mrakiaceae</taxon>
        <taxon>Phaffia</taxon>
    </lineage>
</organism>
<evidence type="ECO:0000250" key="1">
    <source>
        <dbReference type="UniProtKB" id="P15496"/>
    </source>
</evidence>
<evidence type="ECO:0000250" key="2">
    <source>
        <dbReference type="UniProtKB" id="Q13907"/>
    </source>
</evidence>
<evidence type="ECO:0000250" key="3">
    <source>
        <dbReference type="UniProtKB" id="Q46822"/>
    </source>
</evidence>
<evidence type="ECO:0000255" key="4">
    <source>
        <dbReference type="PROSITE-ProRule" id="PRU00794"/>
    </source>
</evidence>
<evidence type="ECO:0000269" key="5">
    <source>
    </source>
</evidence>
<evidence type="ECO:0000303" key="6">
    <source>
    </source>
</evidence>
<evidence type="ECO:0000305" key="7"/>
<reference key="1">
    <citation type="journal article" date="1997" name="Biochem. J.">
        <title>Expression of an exogenous isopentenyl diphosphate isomerase gene enhances isoprenoid biosynthesis in Escherichia coli.</title>
        <authorList>
            <person name="Kajiwara S."/>
            <person name="Fraser P.D."/>
            <person name="Kondo K."/>
            <person name="Misawa N."/>
        </authorList>
    </citation>
    <scope>NUCLEOTIDE SEQUENCE [GENOMIC DNA]</scope>
    <scope>FUNCTION</scope>
    <scope>CATALYTIC ACTIVITY</scope>
    <scope>PATHWAY</scope>
</reference>
<dbReference type="EC" id="5.3.3.2" evidence="5"/>
<dbReference type="EMBL" id="Y15811">
    <property type="protein sequence ID" value="CAA75796.1"/>
    <property type="molecule type" value="Genomic_DNA"/>
</dbReference>
<dbReference type="SMR" id="O42641"/>
<dbReference type="UniPathway" id="UPA00059">
    <property type="reaction ID" value="UER00104"/>
</dbReference>
<dbReference type="GO" id="GO:0005737">
    <property type="term" value="C:cytoplasm"/>
    <property type="evidence" value="ECO:0007669"/>
    <property type="project" value="UniProtKB-SubCell"/>
</dbReference>
<dbReference type="GO" id="GO:0004452">
    <property type="term" value="F:isopentenyl-diphosphate delta-isomerase activity"/>
    <property type="evidence" value="ECO:0007669"/>
    <property type="project" value="UniProtKB-EC"/>
</dbReference>
<dbReference type="GO" id="GO:0046872">
    <property type="term" value="F:metal ion binding"/>
    <property type="evidence" value="ECO:0007669"/>
    <property type="project" value="UniProtKB-KW"/>
</dbReference>
<dbReference type="GO" id="GO:0050992">
    <property type="term" value="P:dimethylallyl diphosphate biosynthetic process"/>
    <property type="evidence" value="ECO:0007669"/>
    <property type="project" value="UniProtKB-UniPathway"/>
</dbReference>
<dbReference type="GO" id="GO:0009240">
    <property type="term" value="P:isopentenyl diphosphate biosynthetic process"/>
    <property type="evidence" value="ECO:0007669"/>
    <property type="project" value="TreeGrafter"/>
</dbReference>
<dbReference type="GO" id="GO:0016126">
    <property type="term" value="P:sterol biosynthetic process"/>
    <property type="evidence" value="ECO:0007669"/>
    <property type="project" value="UniProtKB-KW"/>
</dbReference>
<dbReference type="CDD" id="cd02885">
    <property type="entry name" value="NUDIX_IPP_Isomerase"/>
    <property type="match status" value="1"/>
</dbReference>
<dbReference type="FunFam" id="3.90.79.10:FF:000012">
    <property type="entry name" value="Isopentenyl-diphosphate Delta-isomerase 1"/>
    <property type="match status" value="1"/>
</dbReference>
<dbReference type="Gene3D" id="3.90.79.10">
    <property type="entry name" value="Nucleoside Triphosphate Pyrophosphohydrolase"/>
    <property type="match status" value="1"/>
</dbReference>
<dbReference type="InterPro" id="IPR011876">
    <property type="entry name" value="IsopentenylPP_isomerase_typ1"/>
</dbReference>
<dbReference type="InterPro" id="IPR015797">
    <property type="entry name" value="NUDIX_hydrolase-like_dom_sf"/>
</dbReference>
<dbReference type="InterPro" id="IPR000086">
    <property type="entry name" value="NUDIX_hydrolase_dom"/>
</dbReference>
<dbReference type="NCBIfam" id="TIGR02150">
    <property type="entry name" value="IPP_isom_1"/>
    <property type="match status" value="1"/>
</dbReference>
<dbReference type="PANTHER" id="PTHR10885">
    <property type="entry name" value="ISOPENTENYL-DIPHOSPHATE DELTA-ISOMERASE"/>
    <property type="match status" value="1"/>
</dbReference>
<dbReference type="PANTHER" id="PTHR10885:SF0">
    <property type="entry name" value="ISOPENTENYL-DIPHOSPHATE DELTA-ISOMERASE"/>
    <property type="match status" value="1"/>
</dbReference>
<dbReference type="Pfam" id="PF00293">
    <property type="entry name" value="NUDIX"/>
    <property type="match status" value="1"/>
</dbReference>
<dbReference type="PIRSF" id="PIRSF018427">
    <property type="entry name" value="Isopntndiph_ism"/>
    <property type="match status" value="1"/>
</dbReference>
<dbReference type="SUPFAM" id="SSF55811">
    <property type="entry name" value="Nudix"/>
    <property type="match status" value="1"/>
</dbReference>
<dbReference type="PROSITE" id="PS51462">
    <property type="entry name" value="NUDIX"/>
    <property type="match status" value="1"/>
</dbReference>
<accession>O42641</accession>
<comment type="function">
    <text evidence="1 5">Isopentenyl-diphosphate delta-isomerase; part of the second module of ergosterol biosynthesis pathway that includes the middle steps of the pathway (PubMed:9182699). The second module is carried out in the vacuole and involves the formation of farnesyl diphosphate, which is also an important intermediate in the biosynthesis of ubiquinone, dolichol, heme and prenylated proteins (By similarity). Activity by the mevalonate kinase first converts mevalonate into 5-phosphomevalonate (By similarity). 5-phosphomevalonate is then further converted to 5-diphosphomevalonate by the phosphomevalonate kinase (By similarity). The diphosphomevalonate decarboxylase then produces isopentenyl diphosphate (By similarity). The isopentenyl-diphosphate delta-isomerase then catalyzes the 1,3-allylic rearrangement of the homoallylic substrate isopentenyl (IPP) to its highly electrophilic allylic isomer, dimethylallyl diphosphate (DMAPP) (PubMed:9182699). Finally the farnesyl diphosphate synthase catalyzes the sequential condensation of isopentenyl pyrophosphate with dimethylallyl pyrophosphate, and then with the resultant geranylpyrophosphate to the ultimate product farnesyl pyrophosphate (By similarity).</text>
</comment>
<comment type="catalytic activity">
    <reaction evidence="5">
        <text>isopentenyl diphosphate = dimethylallyl diphosphate</text>
        <dbReference type="Rhea" id="RHEA:23284"/>
        <dbReference type="ChEBI" id="CHEBI:57623"/>
        <dbReference type="ChEBI" id="CHEBI:128769"/>
        <dbReference type="EC" id="5.3.3.2"/>
    </reaction>
    <physiologicalReaction direction="left-to-right" evidence="5">
        <dbReference type="Rhea" id="RHEA:23285"/>
    </physiologicalReaction>
</comment>
<comment type="cofactor">
    <cofactor evidence="3">
        <name>Mg(2+)</name>
        <dbReference type="ChEBI" id="CHEBI:18420"/>
    </cofactor>
    <text evidence="3">Binds 1 Mg(2+) ion per subunit.</text>
</comment>
<comment type="pathway">
    <text evidence="5">Isoprenoid biosynthesis; dimethylallyl diphosphate biosynthesis; dimethylallyl diphosphate from isopentenyl diphosphate: step 1/1.</text>
</comment>
<comment type="subcellular location">
    <subcellularLocation>
        <location evidence="7">Cytoplasm</location>
    </subcellularLocation>
</comment>
<comment type="similarity">
    <text evidence="7">Belongs to the IPP isomerase type 1 family.</text>
</comment>
<keyword id="KW-0963">Cytoplasm</keyword>
<keyword id="KW-0413">Isomerase</keyword>
<keyword id="KW-0414">Isoprene biosynthesis</keyword>
<keyword id="KW-0444">Lipid biosynthesis</keyword>
<keyword id="KW-0443">Lipid metabolism</keyword>
<keyword id="KW-0460">Magnesium</keyword>
<keyword id="KW-0479">Metal-binding</keyword>
<keyword id="KW-0752">Steroid biosynthesis</keyword>
<keyword id="KW-0753">Steroid metabolism</keyword>
<keyword id="KW-0756">Sterol biosynthesis</keyword>
<keyword id="KW-1207">Sterol metabolism</keyword>
<protein>
    <recommendedName>
        <fullName evidence="7">Isopentenyl-diphosphate delta-isomerase</fullName>
        <ecNumber evidence="5">5.3.3.2</ecNumber>
    </recommendedName>
    <alternativeName>
        <fullName evidence="6">Isopentenyl pyrophosphate isomerase</fullName>
        <shortName evidence="6">IPP isomerase</shortName>
    </alternativeName>
</protein>
<proteinExistence type="evidence at protein level"/>
<feature type="chain" id="PRO_0000205229" description="Isopentenyl-diphosphate delta-isomerase">
    <location>
        <begin position="1"/>
        <end position="251"/>
    </location>
</feature>
<feature type="domain" description="Nudix hydrolase" evidence="4">
    <location>
        <begin position="64"/>
        <end position="212"/>
    </location>
</feature>
<feature type="active site" evidence="1">
    <location>
        <position position="102"/>
    </location>
</feature>
<feature type="active site" evidence="1">
    <location>
        <position position="164"/>
    </location>
</feature>
<feature type="binding site" evidence="2">
    <location>
        <position position="49"/>
    </location>
    <ligand>
        <name>substrate</name>
    </ligand>
</feature>
<feature type="binding site" evidence="3">
    <location>
        <position position="53"/>
    </location>
    <ligand>
        <name>Mg(2+)</name>
        <dbReference type="ChEBI" id="CHEBI:18420"/>
    </ligand>
</feature>
<feature type="binding site" evidence="3">
    <location>
        <position position="66"/>
    </location>
    <ligand>
        <name>Mg(2+)</name>
        <dbReference type="ChEBI" id="CHEBI:18420"/>
    </ligand>
</feature>
<feature type="binding site" evidence="2">
    <location>
        <position position="86"/>
    </location>
    <ligand>
        <name>substrate</name>
    </ligand>
</feature>
<feature type="binding site" evidence="2">
    <location>
        <position position="90"/>
    </location>
    <ligand>
        <name>substrate</name>
    </ligand>
</feature>
<feature type="binding site" evidence="2">
    <location>
        <position position="103"/>
    </location>
    <ligand>
        <name>substrate</name>
    </ligand>
</feature>
<feature type="binding site" evidence="3">
    <location>
        <position position="162"/>
    </location>
    <ligand>
        <name>Mg(2+)</name>
        <dbReference type="ChEBI" id="CHEBI:18420"/>
    </ligand>
</feature>
<feature type="binding site" evidence="3">
    <location>
        <position position="164"/>
    </location>
    <ligand>
        <name>Mg(2+)</name>
        <dbReference type="ChEBI" id="CHEBI:18420"/>
    </ligand>
</feature>
<gene>
    <name evidence="6" type="primary">IDI</name>
</gene>
<sequence length="251" mass="28753">MSMPNIVPPAEVRTEGLSLEEYDEEQVRLMEERCILVNPDDVAYGEASKKTCHLMSNINAPKDLLHRAFSVFLFRPSDGALLLQRRADEKITFPGMWTNTCCSHPLSIKGEVKEENQIGVRRAASRKLEHELGVPTSSTPPDSFTYLTRIHYLAPSDGLWGEHEIDYILFSTTPTEHTGNPNEVSDTRYVTKPELQAMFEDESNSFTPWFKLIARDFLFGWWDQLLARRNEKGEVDAKSLEDLSDNKVWKM</sequence>